<feature type="chain" id="PRO_0000221664" description="Mono(ADP-ribosyl)transferase SpvB">
    <location>
        <begin position="1"/>
        <end position="593"/>
    </location>
</feature>
<feature type="domain" description="TR mART core" evidence="1">
    <location>
        <begin position="375"/>
        <end position="578"/>
    </location>
</feature>
<feature type="region of interest" description="Disordered" evidence="2">
    <location>
        <begin position="361"/>
        <end position="384"/>
    </location>
</feature>
<feature type="compositionally biased region" description="Pro residues" evidence="2">
    <location>
        <begin position="366"/>
        <end position="376"/>
    </location>
</feature>
<feature type="active site" evidence="1">
    <location>
        <position position="473"/>
    </location>
</feature>
<feature type="active site" evidence="1">
    <location>
        <position position="503"/>
    </location>
</feature>
<feature type="active site" evidence="1">
    <location>
        <position position="540"/>
    </location>
</feature>
<feature type="mutagenesis site" description="No ADP-ribosylation of actin, 100- to 1000-fold reduction of virulence in mice." evidence="3 4">
    <original>EAE</original>
    <variation>DAD</variation>
    <location>
        <begin position="538"/>
        <end position="540"/>
    </location>
</feature>
<sequence>MLILNGFSSATLALITPPFLPKGGKALSQSGPDGLASITLPLPISAERGFAPALALHYSSGGGNGPFGVGWSCATMSIARRTSHGVPQYNDSDEFLGPDGEVLVQTLSTGDAPNPVTCFAYGDVSFPQSYTVTRYQPRTESSFYRLEYWVGNSNGDDFWLLHDSNGILHLLGKTAAARLSDPQAASHTAQWLVEESVTPAGEHIYYSYLAENGDNVDLNGNEAGRDRSAMRYLSKVQYGNATPAADLYLWTSATPAVQWLFTLVFDYGERGVDPQVPPAFTAQNSWLARQDPFSLYNYGFEIRLHRLCRQVLMFHHFPDELGEADTLVSRLLLEYDENPILTQLCAARTLAYEGDGYRRAPVNNMMPPPPPPPPPMMGGNSSRPKSKWAIVEESKQIQALRYYSAQGYSVINKYLRGDDYPETQAKETLLSRDYLSTNEPSDEEFKNAMSVYINDIAEGLSSLPETDHRVVYRGLKLDKPALSDVLKEYTTIGNIIIDKAFMSTSPDKAWINDTILNIYLEKGHKGRILGDVAHFKGEAEMLFPPNTKLKIESIVNCGSQDFASQLSKLRLSDDATADTNRIKRIINMRVLNS</sequence>
<accession>P24419</accession>
<proteinExistence type="evidence at protein level"/>
<evidence type="ECO:0000255" key="1">
    <source>
        <dbReference type="PROSITE-ProRule" id="PRU01340"/>
    </source>
</evidence>
<evidence type="ECO:0000256" key="2">
    <source>
        <dbReference type="SAM" id="MobiDB-lite"/>
    </source>
</evidence>
<evidence type="ECO:0000269" key="3">
    <source>
    </source>
</evidence>
<evidence type="ECO:0000269" key="4">
    <source>
    </source>
</evidence>
<evidence type="ECO:0000269" key="5">
    <source>
    </source>
</evidence>
<evidence type="ECO:0000305" key="6"/>
<reference key="1">
    <citation type="journal article" date="1991" name="Mol. Microbiol.">
        <title>Molecular analysis of the virulence locus of the Salmonella dublin plasmid pSDL2.</title>
        <authorList>
            <person name="Krause M."/>
            <person name="Roudier C."/>
            <person name="Fierer J."/>
            <person name="Harwood J."/>
            <person name="Guiney D."/>
        </authorList>
    </citation>
    <scope>NUCLEOTIDE SEQUENCE [GENOMIC DNA]</scope>
    <source>
        <strain>Lane</strain>
    </source>
</reference>
<reference key="2">
    <citation type="journal article" date="1992" name="J. Bacteriol.">
        <title>Characterization of translation termination mutations in the spv operon of the Salmonella virulence plasmid pSDL2.</title>
        <authorList>
            <person name="Roudier C."/>
            <person name="Fierer J."/>
            <person name="Guiney D.G."/>
        </authorList>
    </citation>
    <scope>DISRUPTION PHENOTYPE</scope>
    <source>
        <strain>Lane</strain>
    </source>
</reference>
<reference key="3">
    <citation type="journal article" date="2001" name="Mol. Microbiol.">
        <title>The Salmonella spvB virulence gene encodes an enzyme that ADP-ribosylates actin and destabilizes the cytoskeleton of eukaryotic cells.</title>
        <authorList>
            <person name="Lesnick M.L."/>
            <person name="Reiner N.E."/>
            <person name="Fierer J."/>
            <person name="Guiney D.G."/>
        </authorList>
    </citation>
    <scope>FUNCTION AS AN ADP-RIBOSYLTRANSFERASE</scope>
    <scope>FUNCTION IN MOUSE VIRULENCE</scope>
    <scope>MUTAGENESIS OF 538-GLU--GLU-540</scope>
    <source>
        <strain>Lane</strain>
    </source>
</reference>
<reference key="4">
    <citation type="journal article" date="2002" name="Infect. Immun.">
        <title>Genetic requirements for Salmonella-induced cytopathology in human monocyte-derived macrophages.</title>
        <authorList>
            <person name="Browne S.H."/>
            <person name="Lesnick M.L."/>
            <person name="Guiney D.G."/>
        </authorList>
    </citation>
    <scope>FUNCTION IN INFECTION OF HUMAN MACROPHAGES</scope>
    <scope>MUTAGENESIS OF 538-GLU--GLU-540</scope>
    <scope>SECRETION VIA SPI-2 TYPE III SECRETION SYSTEM</scope>
    <source>
        <strain>Lane</strain>
    </source>
</reference>
<gene>
    <name type="primary">spvB</name>
    <name type="synonym">vsdC</name>
</gene>
<dbReference type="EC" id="2.4.2.31"/>
<dbReference type="EMBL" id="X56727">
    <property type="protein sequence ID" value="CAA40049.1"/>
    <property type="molecule type" value="Genomic_DNA"/>
</dbReference>
<dbReference type="PIR" id="S15215">
    <property type="entry name" value="S15215"/>
</dbReference>
<dbReference type="RefSeq" id="WP_001675599.1">
    <property type="nucleotide sequence ID" value="NZ_VDCP01000013.1"/>
</dbReference>
<dbReference type="RefSeq" id="YP_001716113.1">
    <property type="nucleotide sequence ID" value="NC_010422.1"/>
</dbReference>
<dbReference type="RefSeq" id="YP_006954901.1">
    <property type="nucleotide sequence ID" value="NC_019106.1"/>
</dbReference>
<dbReference type="SMR" id="P24419"/>
<dbReference type="PHI-base" id="PHI:4516"/>
<dbReference type="GO" id="GO:0005737">
    <property type="term" value="C:cytoplasm"/>
    <property type="evidence" value="ECO:0007669"/>
    <property type="project" value="InterPro"/>
</dbReference>
<dbReference type="GO" id="GO:0005576">
    <property type="term" value="C:extracellular region"/>
    <property type="evidence" value="ECO:0007669"/>
    <property type="project" value="UniProtKB-SubCell"/>
</dbReference>
<dbReference type="GO" id="GO:0106274">
    <property type="term" value="F:NAD+-protein-arginine ADP-ribosyltransferase activity"/>
    <property type="evidence" value="ECO:0007669"/>
    <property type="project" value="UniProtKB-EC"/>
</dbReference>
<dbReference type="GO" id="GO:0000166">
    <property type="term" value="F:nucleotide binding"/>
    <property type="evidence" value="ECO:0007669"/>
    <property type="project" value="UniProtKB-KW"/>
</dbReference>
<dbReference type="GO" id="GO:0016779">
    <property type="term" value="F:nucleotidyltransferase activity"/>
    <property type="evidence" value="ECO:0007669"/>
    <property type="project" value="UniProtKB-KW"/>
</dbReference>
<dbReference type="GO" id="GO:0090729">
    <property type="term" value="F:toxin activity"/>
    <property type="evidence" value="ECO:0007669"/>
    <property type="project" value="UniProtKB-KW"/>
</dbReference>
<dbReference type="Gene3D" id="3.90.176.10">
    <property type="entry name" value="Toxin ADP-ribosyltransferase, Chain A, domain 1"/>
    <property type="match status" value="1"/>
</dbReference>
<dbReference type="InterPro" id="IPR003540">
    <property type="entry name" value="ADP-ribosyltransferase"/>
</dbReference>
<dbReference type="InterPro" id="IPR003284">
    <property type="entry name" value="Sal_SpvB"/>
</dbReference>
<dbReference type="NCBIfam" id="NF011780">
    <property type="entry name" value="PRK15244.1"/>
    <property type="match status" value="1"/>
</dbReference>
<dbReference type="Pfam" id="PF03496">
    <property type="entry name" value="ADPrib_exo_Tox"/>
    <property type="match status" value="1"/>
</dbReference>
<dbReference type="Pfam" id="PF03534">
    <property type="entry name" value="SpvB"/>
    <property type="match status" value="1"/>
</dbReference>
<dbReference type="PRINTS" id="PR01341">
    <property type="entry name" value="SALSPVBPROT"/>
</dbReference>
<dbReference type="SUPFAM" id="SSF56399">
    <property type="entry name" value="ADP-ribosylation"/>
    <property type="match status" value="1"/>
</dbReference>
<dbReference type="PROSITE" id="PS51996">
    <property type="entry name" value="TR_MART"/>
    <property type="match status" value="1"/>
</dbReference>
<protein>
    <recommendedName>
        <fullName>Mono(ADP-ribosyl)transferase SpvB</fullName>
        <shortName>mADPRT</shortName>
        <shortName>mART</shortName>
        <ecNumber>2.4.2.31</ecNumber>
    </recommendedName>
    <alternativeName>
        <fullName>65 kDa virulence protein</fullName>
    </alternativeName>
    <alternativeName>
        <fullName>NAD(+)--arginine ADP-ribosyltransferase</fullName>
    </alternativeName>
    <alternativeName>
        <fullName>Toxin SpvB</fullName>
    </alternativeName>
</protein>
<organism>
    <name type="scientific">Salmonella dublin</name>
    <dbReference type="NCBI Taxonomy" id="98360"/>
    <lineage>
        <taxon>Bacteria</taxon>
        <taxon>Pseudomonadati</taxon>
        <taxon>Pseudomonadota</taxon>
        <taxon>Gammaproteobacteria</taxon>
        <taxon>Enterobacterales</taxon>
        <taxon>Enterobacteriaceae</taxon>
        <taxon>Salmonella</taxon>
    </lineage>
</organism>
<name>SPVB_SALDU</name>
<comment type="function">
    <text evidence="3 4">Mono-ADP-ribosylates muscle and non-muscle actin. ADP-ribosylates Chinese hamster ovary and HeLa cell actin as well as rabbit muscle, porcine heart actin and non-muscle beta- and gamma-actin. ADP-ribosylation of actin prevents the polymerization of G actin to F actin, causing actin filament depolymerization, destruction of the cytoskeleton and cytotoxicity; this requires only the C-terminal 120 residues. Does not possess NAD(+)-glycohydrolase activity, unlike most mART enzymes.</text>
</comment>
<comment type="catalytic activity">
    <reaction>
        <text>L-arginyl-[protein] + NAD(+) = N(omega)-(ADP-D-ribosyl)-L-arginyl-[protein] + nicotinamide + H(+)</text>
        <dbReference type="Rhea" id="RHEA:19149"/>
        <dbReference type="Rhea" id="RHEA-COMP:10532"/>
        <dbReference type="Rhea" id="RHEA-COMP:15087"/>
        <dbReference type="ChEBI" id="CHEBI:15378"/>
        <dbReference type="ChEBI" id="CHEBI:17154"/>
        <dbReference type="ChEBI" id="CHEBI:29965"/>
        <dbReference type="ChEBI" id="CHEBI:57540"/>
        <dbReference type="ChEBI" id="CHEBI:142554"/>
        <dbReference type="EC" id="2.4.2.31"/>
    </reaction>
</comment>
<comment type="subcellular location">
    <subcellularLocation>
        <location>Secreted</location>
    </subcellularLocation>
    <text>Secreted via the type III secretion system 2 (SPI-2 T3SS).</text>
</comment>
<comment type="disruption phenotype">
    <text evidence="5">A non-polar disruption of this gene is no longer virulent in mouse infection.</text>
</comment>
<comment type="miscellaneous">
    <text>In Salmonella spp. the spv gene cluster is encoded on a highly transmissible plasmid.</text>
</comment>
<comment type="similarity">
    <text evidence="6">Belongs to the SpvB family.</text>
</comment>
<keyword id="KW-0328">Glycosyltransferase</keyword>
<keyword id="KW-0520">NAD</keyword>
<keyword id="KW-0521">NADP</keyword>
<keyword id="KW-0547">Nucleotide-binding</keyword>
<keyword id="KW-0548">Nucleotidyltransferase</keyword>
<keyword id="KW-0614">Plasmid</keyword>
<keyword id="KW-0964">Secreted</keyword>
<keyword id="KW-0800">Toxin</keyword>
<keyword id="KW-0808">Transferase</keyword>
<keyword id="KW-0843">Virulence</keyword>
<geneLocation type="plasmid">
    <name>pSDL2</name>
</geneLocation>